<name>AERA_AEREN</name>
<gene>
    <name type="primary">aerA</name>
</gene>
<accession>P09166</accession>
<organism>
    <name type="scientific">Aeromonas enteropelogenes</name>
    <name type="common">Aeromonas trota</name>
    <dbReference type="NCBI Taxonomy" id="29489"/>
    <lineage>
        <taxon>Bacteria</taxon>
        <taxon>Pseudomonadati</taxon>
        <taxon>Pseudomonadota</taxon>
        <taxon>Gammaproteobacteria</taxon>
        <taxon>Aeromonadales</taxon>
        <taxon>Aeromonadaceae</taxon>
        <taxon>Aeromonas</taxon>
    </lineage>
</organism>
<proteinExistence type="inferred from homology"/>
<reference key="1">
    <citation type="journal article" date="1988" name="Mol. Microbiol.">
        <title>Nucleotide sequence and transcriptional analysis of the aerCaerA region of Aeromonas sobria encoding aerolysin and its regulatory region.</title>
        <authorList>
            <person name="Husslein V."/>
            <person name="Huhle B."/>
            <person name="Jarchau T."/>
            <person name="Lurz R."/>
            <person name="Goebel W."/>
            <person name="Chakraborty T."/>
        </authorList>
    </citation>
    <scope>NUCLEOTIDE SEQUENCE [GENOMIC DNA]</scope>
    <scope>SUBCELLULAR LOCATION</scope>
    <source>
        <strain>AB3</strain>
    </source>
</reference>
<evidence type="ECO:0000250" key="1"/>
<evidence type="ECO:0000269" key="2">
    <source>
    </source>
</evidence>
<evidence type="ECO:0000305" key="3"/>
<sequence>MKALKITGLSLIISATLAAQTNAAEPIYPDQLRLFSLGEDVCGTDYRPINREEAQSVRNNIVAMMGQWQISGLANNWVILGPGYNGEIKPGKASTTWCYPTRPATAEIPVLPAFNIPDGDAVDVQWRMVHDSANFIKPVSYLAHYLGYAWVGGDHSQFVGDDMDVIQEGDDWVLRGNDGGKCDGYRCNEKSSIRVSNFAYTLDPGSFSHGDVTQSERTLVHTVVGWATNISDTPQSGYDVTLNYTTMSNWSKTNTYGLSEKVSTKNKFKWPLVGETEVSIEIAANQSWASQNGGAVTTALSQSVRPVVPARSRVPVKIELYKANISYPYEFKADMSYDLTFNGFLRWGGNAWHTHPEDRPTLSHTFAIGPFKDKASSIRYQWDKRYLPGEMKWWDWNWAIQQNGLATMQDSLARVLRPVRASITGDFRAESQFAGNIEIGTPVPLGSDSKVRRTRSVDGANTGLKLDIPLDAQELAELGFENVTLSVTPARN</sequence>
<protein>
    <recommendedName>
        <fullName>Aerolysin</fullName>
    </recommendedName>
</protein>
<dbReference type="EMBL" id="Y00559">
    <property type="protein sequence ID" value="CAA68642.1"/>
    <property type="molecule type" value="Genomic_DNA"/>
</dbReference>
<dbReference type="RefSeq" id="WP_042070784.1">
    <property type="nucleotide sequence ID" value="NZ_CDDE01000012.1"/>
</dbReference>
<dbReference type="SMR" id="P09166"/>
<dbReference type="GeneID" id="92809464"/>
<dbReference type="GO" id="GO:0005576">
    <property type="term" value="C:extracellular region"/>
    <property type="evidence" value="ECO:0007669"/>
    <property type="project" value="UniProtKB-SubCell"/>
</dbReference>
<dbReference type="GO" id="GO:0020002">
    <property type="term" value="C:host cell plasma membrane"/>
    <property type="evidence" value="ECO:0007669"/>
    <property type="project" value="UniProtKB-SubCell"/>
</dbReference>
<dbReference type="GO" id="GO:0016020">
    <property type="term" value="C:membrane"/>
    <property type="evidence" value="ECO:0007669"/>
    <property type="project" value="UniProtKB-KW"/>
</dbReference>
<dbReference type="GO" id="GO:0090729">
    <property type="term" value="F:toxin activity"/>
    <property type="evidence" value="ECO:0007669"/>
    <property type="project" value="UniProtKB-KW"/>
</dbReference>
<dbReference type="GO" id="GO:0031640">
    <property type="term" value="P:killing of cells of another organism"/>
    <property type="evidence" value="ECO:0007669"/>
    <property type="project" value="UniProtKB-KW"/>
</dbReference>
<dbReference type="CDD" id="cd20218">
    <property type="entry name" value="PFM_aerolysin"/>
    <property type="match status" value="1"/>
</dbReference>
<dbReference type="Gene3D" id="3.10.40.10">
    <property type="entry name" value="Aerolysin/Pertussis toxin (APT), N-terminal domain"/>
    <property type="match status" value="1"/>
</dbReference>
<dbReference type="Gene3D" id="3.30.412.10">
    <property type="entry name" value="Proaerolysin, chain A, domain 2"/>
    <property type="match status" value="1"/>
</dbReference>
<dbReference type="Gene3D" id="2.170.15.10">
    <property type="entry name" value="Proaerolysin, chain A, domain 3"/>
    <property type="match status" value="1"/>
</dbReference>
<dbReference type="InterPro" id="IPR055267">
    <property type="entry name" value="Aerolysin-like_C"/>
</dbReference>
<dbReference type="InterPro" id="IPR005831">
    <property type="entry name" value="Aerolysin/haemolysin_CS"/>
</dbReference>
<dbReference type="InterPro" id="IPR005830">
    <property type="entry name" value="Aerolysn"/>
</dbReference>
<dbReference type="InterPro" id="IPR005138">
    <property type="entry name" value="APT_dom"/>
</dbReference>
<dbReference type="InterPro" id="IPR037015">
    <property type="entry name" value="APT_N_sf"/>
</dbReference>
<dbReference type="InterPro" id="IPR016187">
    <property type="entry name" value="CTDL_fold"/>
</dbReference>
<dbReference type="Pfam" id="PF01117">
    <property type="entry name" value="Aerolysin"/>
    <property type="match status" value="1"/>
</dbReference>
<dbReference type="Pfam" id="PF03440">
    <property type="entry name" value="APT"/>
    <property type="match status" value="1"/>
</dbReference>
<dbReference type="PRINTS" id="PR00754">
    <property type="entry name" value="AEROLYSIN"/>
</dbReference>
<dbReference type="SMART" id="SM00999">
    <property type="entry name" value="Aerolysin"/>
    <property type="match status" value="1"/>
</dbReference>
<dbReference type="SUPFAM" id="SSF56973">
    <property type="entry name" value="Aerolisin/ETX pore-forming domain"/>
    <property type="match status" value="1"/>
</dbReference>
<dbReference type="SUPFAM" id="SSF56436">
    <property type="entry name" value="C-type lectin-like"/>
    <property type="match status" value="1"/>
</dbReference>
<dbReference type="PROSITE" id="PS00274">
    <property type="entry name" value="AEROLYSIN"/>
    <property type="match status" value="1"/>
</dbReference>
<keyword id="KW-0204">Cytolysis</keyword>
<keyword id="KW-1015">Disulfide bond</keyword>
<keyword id="KW-0354">Hemolysis</keyword>
<keyword id="KW-1032">Host cell membrane</keyword>
<keyword id="KW-1043">Host membrane</keyword>
<keyword id="KW-0472">Membrane</keyword>
<keyword id="KW-0964">Secreted</keyword>
<keyword id="KW-0732">Signal</keyword>
<keyword id="KW-0800">Toxin</keyword>
<keyword id="KW-0812">Transmembrane</keyword>
<keyword id="KW-1134">Transmembrane beta strand</keyword>
<keyword id="KW-0843">Virulence</keyword>
<comment type="function">
    <text evidence="1">Secreted, cytolytic toxin that forms pores in host membranes after proteolytic removal of a C-terminal propeptide, leading to destruction of the membrane permeability barrier and cell death. The pores are formed by transmembrane beta-strands and are approximately 3 nm in diameter (By similarity).</text>
</comment>
<comment type="subunit">
    <text evidence="1">Homodimer in solution; homoheptamer in the host membrane. After binding to GPI-anchored proteins in target membranes and proteolytic removal of the C-terminal propeptide, the protein assembles into a heptameric pre-pore complex. A further conformation change leads to insertion into the host membrane (By similarity).</text>
</comment>
<comment type="subcellular location">
    <subcellularLocation>
        <location evidence="2">Secreted</location>
    </subcellularLocation>
    <subcellularLocation>
        <location evidence="2">Host cell membrane</location>
    </subcellularLocation>
    <text>Secreted as a soluble precursor.</text>
</comment>
<comment type="domain">
    <text evidence="1">The C-terminal propeptide is required for normal protein folding and secretion; it maintains the aerolysin precursor in its soluble form and prevents premature heptamerization and pore formation.</text>
</comment>
<comment type="PTM">
    <text evidence="1">Proteolytic cleavage and subsequent release of the propeptide trigger a major conformation change, leading to the formation of a heptameric pre-pore that then inserts into the host membrane.</text>
</comment>
<comment type="similarity">
    <text evidence="3">Belongs to the aerolysin family.</text>
</comment>
<comment type="caution">
    <text evidence="3">Was originally thought to originate from A.sobria.</text>
</comment>
<feature type="signal peptide">
    <location>
        <begin position="1"/>
        <end position="21"/>
    </location>
</feature>
<feature type="chain" id="PRO_0000035632" description="Aerolysin">
    <location>
        <begin position="22"/>
        <end position="445"/>
    </location>
</feature>
<feature type="propeptide" id="PRO_0000035633">
    <location>
        <begin position="446"/>
        <end position="492"/>
    </location>
</feature>
<feature type="region of interest" description="Interaction with host N-linked glycan" evidence="1">
    <location>
        <begin position="68"/>
        <end position="84"/>
    </location>
</feature>
<feature type="region of interest" description="Part of the transmembrane beta-barrel after proteolytic activation of the toxin and insertion into the host membrane" evidence="1">
    <location>
        <begin position="256"/>
        <end position="288"/>
    </location>
</feature>
<feature type="region of interest" description="Interaction with glycans from host GPI-anchor" evidence="1">
    <location>
        <begin position="346"/>
        <end position="355"/>
    </location>
</feature>
<feature type="site" description="Important for oligomerization" evidence="1">
    <location>
        <position position="155"/>
    </location>
</feature>
<feature type="site" description="Important for heptamerization" evidence="1">
    <location>
        <position position="374"/>
    </location>
</feature>
<feature type="site" description="Important for heptamerization" evidence="1">
    <location>
        <position position="390"/>
    </location>
</feature>
<feature type="disulfide bond" evidence="1">
    <location>
        <begin position="42"/>
        <end position="98"/>
    </location>
</feature>
<feature type="disulfide bond" evidence="1">
    <location>
        <begin position="182"/>
        <end position="187"/>
    </location>
</feature>